<proteinExistence type="inferred from homology"/>
<keyword id="KW-0378">Hydrolase</keyword>
<protein>
    <recommendedName>
        <fullName evidence="1">Deoxyguanosinetriphosphate triphosphohydrolase-like protein</fullName>
    </recommendedName>
</protein>
<feature type="chain" id="PRO_1000066441" description="Deoxyguanosinetriphosphate triphosphohydrolase-like protein">
    <location>
        <begin position="1"/>
        <end position="405"/>
    </location>
</feature>
<feature type="domain" description="HD" evidence="2">
    <location>
        <begin position="75"/>
        <end position="219"/>
    </location>
</feature>
<name>DGTL1_SINMW</name>
<reference key="1">
    <citation type="submission" date="2007-06" db="EMBL/GenBank/DDBJ databases">
        <title>Complete sequence of Sinorhizobium medicae WSM419 chromosome.</title>
        <authorList>
            <consortium name="US DOE Joint Genome Institute"/>
            <person name="Copeland A."/>
            <person name="Lucas S."/>
            <person name="Lapidus A."/>
            <person name="Barry K."/>
            <person name="Glavina del Rio T."/>
            <person name="Dalin E."/>
            <person name="Tice H."/>
            <person name="Pitluck S."/>
            <person name="Chain P."/>
            <person name="Malfatti S."/>
            <person name="Shin M."/>
            <person name="Vergez L."/>
            <person name="Schmutz J."/>
            <person name="Larimer F."/>
            <person name="Land M."/>
            <person name="Hauser L."/>
            <person name="Kyrpides N."/>
            <person name="Mikhailova N."/>
            <person name="Reeve W.G."/>
            <person name="Richardson P."/>
        </authorList>
    </citation>
    <scope>NUCLEOTIDE SEQUENCE [LARGE SCALE GENOMIC DNA]</scope>
    <source>
        <strain>WSM419</strain>
    </source>
</reference>
<organism>
    <name type="scientific">Sinorhizobium medicae (strain WSM419)</name>
    <name type="common">Ensifer medicae</name>
    <dbReference type="NCBI Taxonomy" id="366394"/>
    <lineage>
        <taxon>Bacteria</taxon>
        <taxon>Pseudomonadati</taxon>
        <taxon>Pseudomonadota</taxon>
        <taxon>Alphaproteobacteria</taxon>
        <taxon>Hyphomicrobiales</taxon>
        <taxon>Rhizobiaceae</taxon>
        <taxon>Sinorhizobium/Ensifer group</taxon>
        <taxon>Sinorhizobium</taxon>
    </lineage>
</organism>
<dbReference type="EMBL" id="CP000738">
    <property type="protein sequence ID" value="ABR60008.1"/>
    <property type="molecule type" value="Genomic_DNA"/>
</dbReference>
<dbReference type="RefSeq" id="WP_011975327.1">
    <property type="nucleotide sequence ID" value="NC_009636.1"/>
</dbReference>
<dbReference type="RefSeq" id="YP_001326843.1">
    <property type="nucleotide sequence ID" value="NC_009636.1"/>
</dbReference>
<dbReference type="SMR" id="A6U8M8"/>
<dbReference type="STRING" id="366394.Smed_1157"/>
<dbReference type="KEGG" id="smd:Smed_1157"/>
<dbReference type="PATRIC" id="fig|366394.8.peg.4283"/>
<dbReference type="eggNOG" id="COG0232">
    <property type="taxonomic scope" value="Bacteria"/>
</dbReference>
<dbReference type="HOGENOM" id="CLU_028163_1_0_5"/>
<dbReference type="OrthoDB" id="9803619at2"/>
<dbReference type="Proteomes" id="UP000001108">
    <property type="component" value="Chromosome"/>
</dbReference>
<dbReference type="GO" id="GO:0016793">
    <property type="term" value="F:triphosphoric monoester hydrolase activity"/>
    <property type="evidence" value="ECO:0007669"/>
    <property type="project" value="InterPro"/>
</dbReference>
<dbReference type="CDD" id="cd00077">
    <property type="entry name" value="HDc"/>
    <property type="match status" value="1"/>
</dbReference>
<dbReference type="Gene3D" id="1.10.3210.10">
    <property type="entry name" value="Hypothetical protein af1432"/>
    <property type="match status" value="1"/>
</dbReference>
<dbReference type="HAMAP" id="MF_01212">
    <property type="entry name" value="dGTPase_type2"/>
    <property type="match status" value="1"/>
</dbReference>
<dbReference type="InterPro" id="IPR006261">
    <property type="entry name" value="dGTPase"/>
</dbReference>
<dbReference type="InterPro" id="IPR051094">
    <property type="entry name" value="Diverse_Catalytic_Enzymes"/>
</dbReference>
<dbReference type="InterPro" id="IPR023023">
    <property type="entry name" value="dNTPase_2"/>
</dbReference>
<dbReference type="InterPro" id="IPR003607">
    <property type="entry name" value="HD/PDEase_dom"/>
</dbReference>
<dbReference type="InterPro" id="IPR006674">
    <property type="entry name" value="HD_domain"/>
</dbReference>
<dbReference type="InterPro" id="IPR026875">
    <property type="entry name" value="PHydrolase_assoc_dom"/>
</dbReference>
<dbReference type="NCBIfam" id="TIGR01353">
    <property type="entry name" value="dGTP_triPase"/>
    <property type="match status" value="1"/>
</dbReference>
<dbReference type="NCBIfam" id="NF002326">
    <property type="entry name" value="PRK01286.1-1"/>
    <property type="match status" value="1"/>
</dbReference>
<dbReference type="NCBIfam" id="NF002328">
    <property type="entry name" value="PRK01286.1-3"/>
    <property type="match status" value="1"/>
</dbReference>
<dbReference type="PANTHER" id="PTHR35795:SF1">
    <property type="entry name" value="BIS(5'-NUCLEOSYL)-TETRAPHOSPHATASE, SYMMETRICAL"/>
    <property type="match status" value="1"/>
</dbReference>
<dbReference type="PANTHER" id="PTHR35795">
    <property type="entry name" value="SLR1885 PROTEIN"/>
    <property type="match status" value="1"/>
</dbReference>
<dbReference type="Pfam" id="PF01966">
    <property type="entry name" value="HD"/>
    <property type="match status" value="1"/>
</dbReference>
<dbReference type="Pfam" id="PF13286">
    <property type="entry name" value="HD_assoc"/>
    <property type="match status" value="1"/>
</dbReference>
<dbReference type="SMART" id="SM00471">
    <property type="entry name" value="HDc"/>
    <property type="match status" value="1"/>
</dbReference>
<dbReference type="SUPFAM" id="SSF109604">
    <property type="entry name" value="HD-domain/PDEase-like"/>
    <property type="match status" value="1"/>
</dbReference>
<dbReference type="PROSITE" id="PS51831">
    <property type="entry name" value="HD"/>
    <property type="match status" value="1"/>
</dbReference>
<gene>
    <name type="ordered locus">Smed_1157</name>
</gene>
<comment type="similarity">
    <text evidence="1">Belongs to the dGTPase family. Type 2 subfamily.</text>
</comment>
<sequence>MTVDRQALGFGYGEHAAYASNPWASRGRLYPEASSPTRSDFQRDRDRIVHTTAFRRLKHKTQVFIAADGDHYRTRLTHTIEVAQIARALARALNLDEDLAEGVALVHDFGHTPFGHTGEDALDEVLKPYGGFDHNAQSLRIVTKLERRYAEFDGLNLTWESLEGLVKHNGPLTTADGQGLRGPVSQPILDYCALHDLELASFASLEAQVAAIADDIAYNTHDIDDGLRAGYLTFEMLEEIPFLARLMYEVRDRYPGLESSRFTHEIMRRQITAMVEDVIGVSQRGLADVRPASARDVRCAGRVIATFSDEMSETDRQIKNLLMTRIYRHPEVMRVREGAASIVTDLYRAFMDDPSLMKEHYWIDQIAGMEEPARARHVGDYLAGMTDTFAISVHRRLFDHTPDLR</sequence>
<evidence type="ECO:0000255" key="1">
    <source>
        <dbReference type="HAMAP-Rule" id="MF_01212"/>
    </source>
</evidence>
<evidence type="ECO:0000255" key="2">
    <source>
        <dbReference type="PROSITE-ProRule" id="PRU01175"/>
    </source>
</evidence>
<accession>A6U8M8</accession>